<organism>
    <name type="scientific">Burkholderia mallei (strain SAVP1)</name>
    <dbReference type="NCBI Taxonomy" id="320388"/>
    <lineage>
        <taxon>Bacteria</taxon>
        <taxon>Pseudomonadati</taxon>
        <taxon>Pseudomonadota</taxon>
        <taxon>Betaproteobacteria</taxon>
        <taxon>Burkholderiales</taxon>
        <taxon>Burkholderiaceae</taxon>
        <taxon>Burkholderia</taxon>
        <taxon>pseudomallei group</taxon>
    </lineage>
</organism>
<dbReference type="EC" id="3.6.-.-" evidence="1"/>
<dbReference type="EMBL" id="CP000526">
    <property type="protein sequence ID" value="ABM49567.1"/>
    <property type="status" value="ALT_INIT"/>
    <property type="molecule type" value="Genomic_DNA"/>
</dbReference>
<dbReference type="RefSeq" id="WP_004524586.1">
    <property type="nucleotide sequence ID" value="NC_008785.1"/>
</dbReference>
<dbReference type="SMR" id="A1V7D3"/>
<dbReference type="GeneID" id="93058592"/>
<dbReference type="KEGG" id="bmv:BMASAVP1_A2842"/>
<dbReference type="HOGENOM" id="CLU_019624_4_1_4"/>
<dbReference type="GO" id="GO:0005829">
    <property type="term" value="C:cytosol"/>
    <property type="evidence" value="ECO:0007669"/>
    <property type="project" value="TreeGrafter"/>
</dbReference>
<dbReference type="GO" id="GO:0005525">
    <property type="term" value="F:GTP binding"/>
    <property type="evidence" value="ECO:0007669"/>
    <property type="project" value="UniProtKB-UniRule"/>
</dbReference>
<dbReference type="GO" id="GO:0003924">
    <property type="term" value="F:GTPase activity"/>
    <property type="evidence" value="ECO:0007669"/>
    <property type="project" value="UniProtKB-UniRule"/>
</dbReference>
<dbReference type="GO" id="GO:0046872">
    <property type="term" value="F:metal ion binding"/>
    <property type="evidence" value="ECO:0007669"/>
    <property type="project" value="UniProtKB-KW"/>
</dbReference>
<dbReference type="GO" id="GO:0030488">
    <property type="term" value="P:tRNA methylation"/>
    <property type="evidence" value="ECO:0007669"/>
    <property type="project" value="TreeGrafter"/>
</dbReference>
<dbReference type="GO" id="GO:0002098">
    <property type="term" value="P:tRNA wobble uridine modification"/>
    <property type="evidence" value="ECO:0007669"/>
    <property type="project" value="TreeGrafter"/>
</dbReference>
<dbReference type="CDD" id="cd04164">
    <property type="entry name" value="trmE"/>
    <property type="match status" value="1"/>
</dbReference>
<dbReference type="CDD" id="cd14858">
    <property type="entry name" value="TrmE_N"/>
    <property type="match status" value="1"/>
</dbReference>
<dbReference type="Gene3D" id="3.40.50.300">
    <property type="entry name" value="P-loop containing nucleotide triphosphate hydrolases"/>
    <property type="match status" value="1"/>
</dbReference>
<dbReference type="Gene3D" id="3.30.1360.120">
    <property type="entry name" value="Probable tRNA modification gtpase trme, domain 1"/>
    <property type="match status" value="1"/>
</dbReference>
<dbReference type="Gene3D" id="1.20.120.430">
    <property type="entry name" value="tRNA modification GTPase MnmE domain 2"/>
    <property type="match status" value="1"/>
</dbReference>
<dbReference type="HAMAP" id="MF_00379">
    <property type="entry name" value="GTPase_MnmE"/>
    <property type="match status" value="1"/>
</dbReference>
<dbReference type="InterPro" id="IPR031168">
    <property type="entry name" value="G_TrmE"/>
</dbReference>
<dbReference type="InterPro" id="IPR006073">
    <property type="entry name" value="GTP-bd"/>
</dbReference>
<dbReference type="InterPro" id="IPR018948">
    <property type="entry name" value="GTP-bd_TrmE_N"/>
</dbReference>
<dbReference type="InterPro" id="IPR004520">
    <property type="entry name" value="GTPase_MnmE"/>
</dbReference>
<dbReference type="InterPro" id="IPR027368">
    <property type="entry name" value="MnmE_dom2"/>
</dbReference>
<dbReference type="InterPro" id="IPR025867">
    <property type="entry name" value="MnmE_helical"/>
</dbReference>
<dbReference type="InterPro" id="IPR027417">
    <property type="entry name" value="P-loop_NTPase"/>
</dbReference>
<dbReference type="InterPro" id="IPR005225">
    <property type="entry name" value="Small_GTP-bd"/>
</dbReference>
<dbReference type="InterPro" id="IPR027266">
    <property type="entry name" value="TrmE/GcvT_dom1"/>
</dbReference>
<dbReference type="NCBIfam" id="TIGR00450">
    <property type="entry name" value="mnmE_trmE_thdF"/>
    <property type="match status" value="1"/>
</dbReference>
<dbReference type="NCBIfam" id="NF003661">
    <property type="entry name" value="PRK05291.1-3"/>
    <property type="match status" value="1"/>
</dbReference>
<dbReference type="NCBIfam" id="TIGR00231">
    <property type="entry name" value="small_GTP"/>
    <property type="match status" value="1"/>
</dbReference>
<dbReference type="PANTHER" id="PTHR42714">
    <property type="entry name" value="TRNA MODIFICATION GTPASE GTPBP3"/>
    <property type="match status" value="1"/>
</dbReference>
<dbReference type="PANTHER" id="PTHR42714:SF2">
    <property type="entry name" value="TRNA MODIFICATION GTPASE GTPBP3, MITOCHONDRIAL"/>
    <property type="match status" value="1"/>
</dbReference>
<dbReference type="Pfam" id="PF01926">
    <property type="entry name" value="MMR_HSR1"/>
    <property type="match status" value="1"/>
</dbReference>
<dbReference type="Pfam" id="PF12631">
    <property type="entry name" value="MnmE_helical"/>
    <property type="match status" value="1"/>
</dbReference>
<dbReference type="Pfam" id="PF10396">
    <property type="entry name" value="TrmE_N"/>
    <property type="match status" value="1"/>
</dbReference>
<dbReference type="PRINTS" id="PR00326">
    <property type="entry name" value="GTP1OBG"/>
</dbReference>
<dbReference type="SUPFAM" id="SSF52540">
    <property type="entry name" value="P-loop containing nucleoside triphosphate hydrolases"/>
    <property type="match status" value="1"/>
</dbReference>
<dbReference type="SUPFAM" id="SSF116878">
    <property type="entry name" value="TrmE connector domain"/>
    <property type="match status" value="1"/>
</dbReference>
<dbReference type="PROSITE" id="PS51709">
    <property type="entry name" value="G_TRME"/>
    <property type="match status" value="1"/>
</dbReference>
<name>MNME_BURMS</name>
<comment type="function">
    <text evidence="1">Exhibits a very high intrinsic GTPase hydrolysis rate. Involved in the addition of a carboxymethylaminomethyl (cmnm) group at the wobble position (U34) of certain tRNAs, forming tRNA-cmnm(5)s(2)U34.</text>
</comment>
<comment type="cofactor">
    <cofactor evidence="1">
        <name>K(+)</name>
        <dbReference type="ChEBI" id="CHEBI:29103"/>
    </cofactor>
    <text evidence="1">Binds 1 potassium ion per subunit.</text>
</comment>
<comment type="subunit">
    <text evidence="1">Homodimer. Heterotetramer of two MnmE and two MnmG subunits.</text>
</comment>
<comment type="subcellular location">
    <subcellularLocation>
        <location evidence="1">Cytoplasm</location>
    </subcellularLocation>
</comment>
<comment type="similarity">
    <text evidence="1">Belongs to the TRAFAC class TrmE-Era-EngA-EngB-Septin-like GTPase superfamily. TrmE GTPase family.</text>
</comment>
<comment type="sequence caution" evidence="2">
    <conflict type="erroneous initiation">
        <sequence resource="EMBL-CDS" id="ABM49567"/>
    </conflict>
</comment>
<protein>
    <recommendedName>
        <fullName evidence="1">tRNA modification GTPase MnmE</fullName>
        <ecNumber evidence="1">3.6.-.-</ecNumber>
    </recommendedName>
</protein>
<feature type="chain" id="PRO_0000345743" description="tRNA modification GTPase MnmE">
    <location>
        <begin position="1"/>
        <end position="467"/>
    </location>
</feature>
<feature type="domain" description="TrmE-type G">
    <location>
        <begin position="226"/>
        <end position="389"/>
    </location>
</feature>
<feature type="binding site" evidence="1">
    <location>
        <position position="25"/>
    </location>
    <ligand>
        <name>(6S)-5-formyl-5,6,7,8-tetrahydrofolate</name>
        <dbReference type="ChEBI" id="CHEBI:57457"/>
    </ligand>
</feature>
<feature type="binding site" evidence="1">
    <location>
        <position position="87"/>
    </location>
    <ligand>
        <name>(6S)-5-formyl-5,6,7,8-tetrahydrofolate</name>
        <dbReference type="ChEBI" id="CHEBI:57457"/>
    </ligand>
</feature>
<feature type="binding site" evidence="1">
    <location>
        <position position="130"/>
    </location>
    <ligand>
        <name>(6S)-5-formyl-5,6,7,8-tetrahydrofolate</name>
        <dbReference type="ChEBI" id="CHEBI:57457"/>
    </ligand>
</feature>
<feature type="binding site" evidence="1">
    <location>
        <begin position="236"/>
        <end position="241"/>
    </location>
    <ligand>
        <name>GTP</name>
        <dbReference type="ChEBI" id="CHEBI:37565"/>
    </ligand>
</feature>
<feature type="binding site" evidence="1">
    <location>
        <position position="236"/>
    </location>
    <ligand>
        <name>K(+)</name>
        <dbReference type="ChEBI" id="CHEBI:29103"/>
    </ligand>
</feature>
<feature type="binding site" evidence="1">
    <location>
        <position position="240"/>
    </location>
    <ligand>
        <name>Mg(2+)</name>
        <dbReference type="ChEBI" id="CHEBI:18420"/>
    </ligand>
</feature>
<feature type="binding site" evidence="1">
    <location>
        <begin position="255"/>
        <end position="261"/>
    </location>
    <ligand>
        <name>GTP</name>
        <dbReference type="ChEBI" id="CHEBI:37565"/>
    </ligand>
</feature>
<feature type="binding site" evidence="1">
    <location>
        <position position="255"/>
    </location>
    <ligand>
        <name>K(+)</name>
        <dbReference type="ChEBI" id="CHEBI:29103"/>
    </ligand>
</feature>
<feature type="binding site" evidence="1">
    <location>
        <position position="257"/>
    </location>
    <ligand>
        <name>K(+)</name>
        <dbReference type="ChEBI" id="CHEBI:29103"/>
    </ligand>
</feature>
<feature type="binding site" evidence="1">
    <location>
        <position position="260"/>
    </location>
    <ligand>
        <name>K(+)</name>
        <dbReference type="ChEBI" id="CHEBI:29103"/>
    </ligand>
</feature>
<feature type="binding site" evidence="1">
    <location>
        <position position="261"/>
    </location>
    <ligand>
        <name>Mg(2+)</name>
        <dbReference type="ChEBI" id="CHEBI:18420"/>
    </ligand>
</feature>
<feature type="binding site" evidence="1">
    <location>
        <begin position="280"/>
        <end position="283"/>
    </location>
    <ligand>
        <name>GTP</name>
        <dbReference type="ChEBI" id="CHEBI:37565"/>
    </ligand>
</feature>
<feature type="binding site" evidence="1">
    <location>
        <position position="467"/>
    </location>
    <ligand>
        <name>(6S)-5-formyl-5,6,7,8-tetrahydrofolate</name>
        <dbReference type="ChEBI" id="CHEBI:57457"/>
    </ligand>
</feature>
<keyword id="KW-0963">Cytoplasm</keyword>
<keyword id="KW-0342">GTP-binding</keyword>
<keyword id="KW-0378">Hydrolase</keyword>
<keyword id="KW-0460">Magnesium</keyword>
<keyword id="KW-0479">Metal-binding</keyword>
<keyword id="KW-0547">Nucleotide-binding</keyword>
<keyword id="KW-0630">Potassium</keyword>
<keyword id="KW-0819">tRNA processing</keyword>
<reference key="1">
    <citation type="journal article" date="2010" name="Genome Biol. Evol.">
        <title>Continuing evolution of Burkholderia mallei through genome reduction and large-scale rearrangements.</title>
        <authorList>
            <person name="Losada L."/>
            <person name="Ronning C.M."/>
            <person name="DeShazer D."/>
            <person name="Woods D."/>
            <person name="Fedorova N."/>
            <person name="Kim H.S."/>
            <person name="Shabalina S.A."/>
            <person name="Pearson T.R."/>
            <person name="Brinkac L."/>
            <person name="Tan P."/>
            <person name="Nandi T."/>
            <person name="Crabtree J."/>
            <person name="Badger J."/>
            <person name="Beckstrom-Sternberg S."/>
            <person name="Saqib M."/>
            <person name="Schutzer S.E."/>
            <person name="Keim P."/>
            <person name="Nierman W.C."/>
        </authorList>
    </citation>
    <scope>NUCLEOTIDE SEQUENCE [LARGE SCALE GENOMIC DNA]</scope>
    <source>
        <strain>SAVP1</strain>
    </source>
</reference>
<sequence length="467" mass="49453">MLATDSDPIVAIATASGRGGIGVVRLSLGRAGEAAARALSDALCGARLMPRHASYVPFLDGAGEPLDRGIALYFPAPHSYTGEHVIELQGHGGPIVLQLLLQRCLDAGRAHGLRLAEPGEFTRRAFLNDKLDLAQAEAVADLIEASTEAAARSAGRSLDGAFSRDIHALVDDVIALRMLVEATLDFPEEEIDFLEAADARGKLAHIRERLAHVLGDARQGALLREGLSVVLAGQPNVGKSSLLNALAGAELAIVTPIAGTTRDKVAQTIQIEGIPLHIIDTAGLRETEDEVEKIGIARTWGEIERADVVLHLLDARSGLGPGDEAIAARFPDGVPVVRVLNKTDLTGAPASVTRTGGGAARADVCEVRLSAKRGDGIDLLRGELLRIAGWQAGAESVYLARERHLIALRAAQAHLARAAEHAEQNAQALDLFAEELRLAQERLNSITGEFTSDDLLGVIFSRFCIGK</sequence>
<gene>
    <name evidence="1" type="primary">mnmE</name>
    <name evidence="1" type="synonym">trmE</name>
    <name type="ordered locus">BMASAVP1_A2842</name>
</gene>
<evidence type="ECO:0000255" key="1">
    <source>
        <dbReference type="HAMAP-Rule" id="MF_00379"/>
    </source>
</evidence>
<evidence type="ECO:0000305" key="2"/>
<accession>A1V7D3</accession>
<proteinExistence type="inferred from homology"/>